<accession>B4EWY8</accession>
<organism>
    <name type="scientific">Proteus mirabilis (strain HI4320)</name>
    <dbReference type="NCBI Taxonomy" id="529507"/>
    <lineage>
        <taxon>Bacteria</taxon>
        <taxon>Pseudomonadati</taxon>
        <taxon>Pseudomonadota</taxon>
        <taxon>Gammaproteobacteria</taxon>
        <taxon>Enterobacterales</taxon>
        <taxon>Morganellaceae</taxon>
        <taxon>Proteus</taxon>
    </lineage>
</organism>
<name>EPMA_PROMH</name>
<feature type="chain" id="PRO_1000097903" description="Elongation factor P--(R)-beta-lysine ligase">
    <location>
        <begin position="1"/>
        <end position="325"/>
    </location>
</feature>
<feature type="binding site" evidence="1">
    <location>
        <begin position="76"/>
        <end position="78"/>
    </location>
    <ligand>
        <name>substrate</name>
    </ligand>
</feature>
<feature type="binding site" evidence="1">
    <location>
        <begin position="100"/>
        <end position="102"/>
    </location>
    <ligand>
        <name>ATP</name>
        <dbReference type="ChEBI" id="CHEBI:30616"/>
    </ligand>
</feature>
<feature type="binding site" evidence="1">
    <location>
        <position position="109"/>
    </location>
    <ligand>
        <name>ATP</name>
        <dbReference type="ChEBI" id="CHEBI:30616"/>
    </ligand>
</feature>
<feature type="binding site" evidence="1">
    <location>
        <position position="118"/>
    </location>
    <ligand>
        <name>substrate</name>
    </ligand>
</feature>
<feature type="binding site" evidence="1">
    <location>
        <begin position="244"/>
        <end position="245"/>
    </location>
    <ligand>
        <name>ATP</name>
        <dbReference type="ChEBI" id="CHEBI:30616"/>
    </ligand>
</feature>
<feature type="binding site" evidence="1">
    <location>
        <position position="251"/>
    </location>
    <ligand>
        <name>substrate</name>
    </ligand>
</feature>
<feature type="binding site" evidence="1">
    <location>
        <position position="300"/>
    </location>
    <ligand>
        <name>ATP</name>
        <dbReference type="ChEBI" id="CHEBI:30616"/>
    </ligand>
</feature>
<keyword id="KW-0067">ATP-binding</keyword>
<keyword id="KW-0436">Ligase</keyword>
<keyword id="KW-0547">Nucleotide-binding</keyword>
<keyword id="KW-1185">Reference proteome</keyword>
<reference key="1">
    <citation type="journal article" date="2008" name="J. Bacteriol.">
        <title>Complete genome sequence of uropathogenic Proteus mirabilis, a master of both adherence and motility.</title>
        <authorList>
            <person name="Pearson M.M."/>
            <person name="Sebaihia M."/>
            <person name="Churcher C."/>
            <person name="Quail M.A."/>
            <person name="Seshasayee A.S."/>
            <person name="Luscombe N.M."/>
            <person name="Abdellah Z."/>
            <person name="Arrosmith C."/>
            <person name="Atkin B."/>
            <person name="Chillingworth T."/>
            <person name="Hauser H."/>
            <person name="Jagels K."/>
            <person name="Moule S."/>
            <person name="Mungall K."/>
            <person name="Norbertczak H."/>
            <person name="Rabbinowitsch E."/>
            <person name="Walker D."/>
            <person name="Whithead S."/>
            <person name="Thomson N.R."/>
            <person name="Rather P.N."/>
            <person name="Parkhill J."/>
            <person name="Mobley H.L.T."/>
        </authorList>
    </citation>
    <scope>NUCLEOTIDE SEQUENCE [LARGE SCALE GENOMIC DNA]</scope>
    <source>
        <strain>HI4320</strain>
    </source>
</reference>
<dbReference type="EC" id="6.3.2.-" evidence="1"/>
<dbReference type="EMBL" id="AM942759">
    <property type="protein sequence ID" value="CAR47023.1"/>
    <property type="molecule type" value="Genomic_DNA"/>
</dbReference>
<dbReference type="RefSeq" id="WP_004245408.1">
    <property type="nucleotide sequence ID" value="NC_010554.1"/>
</dbReference>
<dbReference type="SMR" id="B4EWY8"/>
<dbReference type="EnsemblBacteria" id="CAR47023">
    <property type="protein sequence ID" value="CAR47023"/>
    <property type="gene ID" value="PMI3589"/>
</dbReference>
<dbReference type="GeneID" id="6803615"/>
<dbReference type="KEGG" id="pmr:PMI3589"/>
<dbReference type="eggNOG" id="COG2269">
    <property type="taxonomic scope" value="Bacteria"/>
</dbReference>
<dbReference type="HOGENOM" id="CLU_008255_1_1_6"/>
<dbReference type="Proteomes" id="UP000008319">
    <property type="component" value="Chromosome"/>
</dbReference>
<dbReference type="GO" id="GO:0005829">
    <property type="term" value="C:cytosol"/>
    <property type="evidence" value="ECO:0007669"/>
    <property type="project" value="TreeGrafter"/>
</dbReference>
<dbReference type="GO" id="GO:0016880">
    <property type="term" value="F:acid-ammonia (or amide) ligase activity"/>
    <property type="evidence" value="ECO:0007669"/>
    <property type="project" value="UniProtKB-UniRule"/>
</dbReference>
<dbReference type="GO" id="GO:0005524">
    <property type="term" value="F:ATP binding"/>
    <property type="evidence" value="ECO:0007669"/>
    <property type="project" value="UniProtKB-UniRule"/>
</dbReference>
<dbReference type="GO" id="GO:0004824">
    <property type="term" value="F:lysine-tRNA ligase activity"/>
    <property type="evidence" value="ECO:0007669"/>
    <property type="project" value="InterPro"/>
</dbReference>
<dbReference type="GO" id="GO:0000049">
    <property type="term" value="F:tRNA binding"/>
    <property type="evidence" value="ECO:0007669"/>
    <property type="project" value="TreeGrafter"/>
</dbReference>
<dbReference type="GO" id="GO:0006430">
    <property type="term" value="P:lysyl-tRNA aminoacylation"/>
    <property type="evidence" value="ECO:0007669"/>
    <property type="project" value="InterPro"/>
</dbReference>
<dbReference type="FunFam" id="3.30.930.10:FF:000017">
    <property type="entry name" value="Elongation factor P--(R)-beta-lysine ligase"/>
    <property type="match status" value="1"/>
</dbReference>
<dbReference type="Gene3D" id="3.30.930.10">
    <property type="entry name" value="Bira Bifunctional Protein, Domain 2"/>
    <property type="match status" value="1"/>
</dbReference>
<dbReference type="HAMAP" id="MF_00174">
    <property type="entry name" value="EF_P_modif_A"/>
    <property type="match status" value="1"/>
</dbReference>
<dbReference type="InterPro" id="IPR004364">
    <property type="entry name" value="Aa-tRNA-synt_II"/>
</dbReference>
<dbReference type="InterPro" id="IPR006195">
    <property type="entry name" value="aa-tRNA-synth_II"/>
</dbReference>
<dbReference type="InterPro" id="IPR045864">
    <property type="entry name" value="aa-tRNA-synth_II/BPL/LPL"/>
</dbReference>
<dbReference type="InterPro" id="IPR004525">
    <property type="entry name" value="EpmA"/>
</dbReference>
<dbReference type="InterPro" id="IPR018149">
    <property type="entry name" value="Lys-tRNA-synth_II_C"/>
</dbReference>
<dbReference type="NCBIfam" id="TIGR00462">
    <property type="entry name" value="genX"/>
    <property type="match status" value="1"/>
</dbReference>
<dbReference type="NCBIfam" id="NF006828">
    <property type="entry name" value="PRK09350.1"/>
    <property type="match status" value="1"/>
</dbReference>
<dbReference type="PANTHER" id="PTHR42918:SF6">
    <property type="entry name" value="ELONGATION FACTOR P--(R)-BETA-LYSINE LIGASE"/>
    <property type="match status" value="1"/>
</dbReference>
<dbReference type="PANTHER" id="PTHR42918">
    <property type="entry name" value="LYSYL-TRNA SYNTHETASE"/>
    <property type="match status" value="1"/>
</dbReference>
<dbReference type="Pfam" id="PF00152">
    <property type="entry name" value="tRNA-synt_2"/>
    <property type="match status" value="1"/>
</dbReference>
<dbReference type="PRINTS" id="PR00982">
    <property type="entry name" value="TRNASYNTHLYS"/>
</dbReference>
<dbReference type="SUPFAM" id="SSF55681">
    <property type="entry name" value="Class II aaRS and biotin synthetases"/>
    <property type="match status" value="1"/>
</dbReference>
<dbReference type="PROSITE" id="PS50862">
    <property type="entry name" value="AA_TRNA_LIGASE_II"/>
    <property type="match status" value="1"/>
</dbReference>
<gene>
    <name evidence="1" type="primary">epmA</name>
    <name type="synonym">yjeA</name>
    <name type="ordered locus">PMI3589</name>
</gene>
<proteinExistence type="inferred from homology"/>
<comment type="function">
    <text evidence="1">With EpmB is involved in the beta-lysylation step of the post-translational modification of translation elongation factor P (EF-P). Catalyzes the ATP-dependent activation of (R)-beta-lysine produced by EpmB, forming a lysyl-adenylate, from which the beta-lysyl moiety is then transferred to the epsilon-amino group of a conserved specific lysine residue in EF-P.</text>
</comment>
<comment type="catalytic activity">
    <reaction evidence="1">
        <text>D-beta-lysine + L-lysyl-[protein] + ATP = N(6)-((3R)-3,6-diaminohexanoyl)-L-lysyl-[protein] + AMP + diphosphate + H(+)</text>
        <dbReference type="Rhea" id="RHEA:83435"/>
        <dbReference type="Rhea" id="RHEA-COMP:9752"/>
        <dbReference type="Rhea" id="RHEA-COMP:20131"/>
        <dbReference type="ChEBI" id="CHEBI:15378"/>
        <dbReference type="ChEBI" id="CHEBI:29969"/>
        <dbReference type="ChEBI" id="CHEBI:30616"/>
        <dbReference type="ChEBI" id="CHEBI:33019"/>
        <dbReference type="ChEBI" id="CHEBI:84138"/>
        <dbReference type="ChEBI" id="CHEBI:156053"/>
        <dbReference type="ChEBI" id="CHEBI:456215"/>
    </reaction>
    <physiologicalReaction direction="left-to-right" evidence="1">
        <dbReference type="Rhea" id="RHEA:83436"/>
    </physiologicalReaction>
</comment>
<comment type="subunit">
    <text evidence="1">Homodimer.</text>
</comment>
<comment type="similarity">
    <text evidence="1">Belongs to the class-II aminoacyl-tRNA synthetase family. EpmA subfamily.</text>
</comment>
<evidence type="ECO:0000255" key="1">
    <source>
        <dbReference type="HAMAP-Rule" id="MF_00174"/>
    </source>
</evidence>
<sequence>MSEIADWQPSASIANLLKKAKIVSNIRRFFADRGVLEVETPMMSQATVTDIHLCPFETQFVGPGASQGLKLYLMTSPEYHMKRLLAANSGPIYQMGRCFRNEEAGRYHNPEFTMLEWYRPCFDMYRLMNEVDDLLQEVLDCEASESLSYQQAFLRYLDIDPLSADKEKLREVAAKLDLSNIADTEENRDTLLQLLFVSGVEPHIGLEKPTFIYHFPASQASLAEISSEDHRVAERFEVYFKGVELANGFRELTDAKEQRLRFERDNRQRVAMGLPEQPIDERFLAALEAGLPECSGVALGVDRLIMLALGVERISDVIAFPVYRA</sequence>
<protein>
    <recommendedName>
        <fullName evidence="1">Elongation factor P--(R)-beta-lysine ligase</fullName>
        <shortName evidence="1">EF-P--(R)-beta-lysine ligase</shortName>
        <ecNumber evidence="1">6.3.2.-</ecNumber>
    </recommendedName>
    <alternativeName>
        <fullName evidence="1">EF-P post-translational modification enzyme A</fullName>
    </alternativeName>
    <alternativeName>
        <fullName evidence="1">EF-P-lysine lysyltransferase</fullName>
    </alternativeName>
</protein>